<gene>
    <name evidence="1" type="primary">folE2</name>
    <name type="ordered locus">xcc-b100_2498</name>
</gene>
<proteinExistence type="inferred from homology"/>
<evidence type="ECO:0000255" key="1">
    <source>
        <dbReference type="HAMAP-Rule" id="MF_01527"/>
    </source>
</evidence>
<feature type="chain" id="PRO_0000372036" description="GTP cyclohydrolase FolE2">
    <location>
        <begin position="1"/>
        <end position="311"/>
    </location>
</feature>
<feature type="site" description="May be catalytically important" evidence="1">
    <location>
        <position position="155"/>
    </location>
</feature>
<dbReference type="EC" id="3.5.4.16" evidence="1"/>
<dbReference type="EMBL" id="AM920689">
    <property type="protein sequence ID" value="CAP51858.1"/>
    <property type="molecule type" value="Genomic_DNA"/>
</dbReference>
<dbReference type="SMR" id="B0RTU4"/>
<dbReference type="KEGG" id="xca:xcc-b100_2498"/>
<dbReference type="HOGENOM" id="CLU_062816_0_0_6"/>
<dbReference type="UniPathway" id="UPA00848">
    <property type="reaction ID" value="UER00151"/>
</dbReference>
<dbReference type="Proteomes" id="UP000001188">
    <property type="component" value="Chromosome"/>
</dbReference>
<dbReference type="GO" id="GO:0003934">
    <property type="term" value="F:GTP cyclohydrolase I activity"/>
    <property type="evidence" value="ECO:0007669"/>
    <property type="project" value="UniProtKB-UniRule"/>
</dbReference>
<dbReference type="GO" id="GO:0046654">
    <property type="term" value="P:tetrahydrofolate biosynthetic process"/>
    <property type="evidence" value="ECO:0007669"/>
    <property type="project" value="UniProtKB-UniRule"/>
</dbReference>
<dbReference type="Gene3D" id="3.10.270.10">
    <property type="entry name" value="Urate Oxidase"/>
    <property type="match status" value="1"/>
</dbReference>
<dbReference type="HAMAP" id="MF_01527_B">
    <property type="entry name" value="GTP_cyclohydrol_B"/>
    <property type="match status" value="1"/>
</dbReference>
<dbReference type="InterPro" id="IPR022838">
    <property type="entry name" value="GTP_cyclohydrolase_FolE2"/>
</dbReference>
<dbReference type="InterPro" id="IPR003801">
    <property type="entry name" value="GTP_cyclohydrolase_FolE2/MptA"/>
</dbReference>
<dbReference type="NCBIfam" id="NF010200">
    <property type="entry name" value="PRK13674.1-1"/>
    <property type="match status" value="1"/>
</dbReference>
<dbReference type="PANTHER" id="PTHR36445">
    <property type="entry name" value="GTP CYCLOHYDROLASE MPTA"/>
    <property type="match status" value="1"/>
</dbReference>
<dbReference type="PANTHER" id="PTHR36445:SF1">
    <property type="entry name" value="GTP CYCLOHYDROLASE MPTA"/>
    <property type="match status" value="1"/>
</dbReference>
<dbReference type="Pfam" id="PF02649">
    <property type="entry name" value="GCHY-1"/>
    <property type="match status" value="1"/>
</dbReference>
<keyword id="KW-0378">Hydrolase</keyword>
<name>GCH4_XANCB</name>
<protein>
    <recommendedName>
        <fullName evidence="1">GTP cyclohydrolase FolE2</fullName>
        <ecNumber evidence="1">3.5.4.16</ecNumber>
    </recommendedName>
</protein>
<comment type="function">
    <text evidence="1">Converts GTP to 7,8-dihydroneopterin triphosphate.</text>
</comment>
<comment type="catalytic activity">
    <reaction evidence="1">
        <text>GTP + H2O = 7,8-dihydroneopterin 3'-triphosphate + formate + H(+)</text>
        <dbReference type="Rhea" id="RHEA:17473"/>
        <dbReference type="ChEBI" id="CHEBI:15377"/>
        <dbReference type="ChEBI" id="CHEBI:15378"/>
        <dbReference type="ChEBI" id="CHEBI:15740"/>
        <dbReference type="ChEBI" id="CHEBI:37565"/>
        <dbReference type="ChEBI" id="CHEBI:58462"/>
        <dbReference type="EC" id="3.5.4.16"/>
    </reaction>
</comment>
<comment type="pathway">
    <text evidence="1">Cofactor biosynthesis; 7,8-dihydroneopterin triphosphate biosynthesis; 7,8-dihydroneopterin triphosphate from GTP: step 1/1.</text>
</comment>
<comment type="similarity">
    <text evidence="1">Belongs to the GTP cyclohydrolase IV family.</text>
</comment>
<sequence>MSATLPDIAVTEPSALHAPLRWVGMQDIAIPVRLDEAEPSGTVAARAQVQVDLPRPELKGIHMSRLYRLLDRHLEQPLSPAMLSQLLQAMIDSHADCGSRAARVSLAFEVMLRMPALRSEGLAGWRAYPVRIDAQSRAGRSEMRLQIDVLYASTCPCSAALSRQLLSKAFAQQHAGQTALRVEDVAQWLQRNGSYATPHSQRSVAQVRVDLVARVQSFDIRALVLLCESALATPVQAAVRRIDEQAFARLNGANLMYVEDAARRLRKELAERYASFHVAVRHFESLHAHDAVAETGSDADVFHMIAESHGQ</sequence>
<accession>B0RTU4</accession>
<reference key="1">
    <citation type="journal article" date="2008" name="J. Biotechnol.">
        <title>The genome of Xanthomonas campestris pv. campestris B100 and its use for the reconstruction of metabolic pathways involved in xanthan biosynthesis.</title>
        <authorList>
            <person name="Vorhoelter F.-J."/>
            <person name="Schneiker S."/>
            <person name="Goesmann A."/>
            <person name="Krause L."/>
            <person name="Bekel T."/>
            <person name="Kaiser O."/>
            <person name="Linke B."/>
            <person name="Patschkowski T."/>
            <person name="Rueckert C."/>
            <person name="Schmid J."/>
            <person name="Sidhu V.K."/>
            <person name="Sieber V."/>
            <person name="Tauch A."/>
            <person name="Watt S.A."/>
            <person name="Weisshaar B."/>
            <person name="Becker A."/>
            <person name="Niehaus K."/>
            <person name="Puehler A."/>
        </authorList>
    </citation>
    <scope>NUCLEOTIDE SEQUENCE [LARGE SCALE GENOMIC DNA]</scope>
    <source>
        <strain>B100</strain>
    </source>
</reference>
<organism>
    <name type="scientific">Xanthomonas campestris pv. campestris (strain B100)</name>
    <dbReference type="NCBI Taxonomy" id="509169"/>
    <lineage>
        <taxon>Bacteria</taxon>
        <taxon>Pseudomonadati</taxon>
        <taxon>Pseudomonadota</taxon>
        <taxon>Gammaproteobacteria</taxon>
        <taxon>Lysobacterales</taxon>
        <taxon>Lysobacteraceae</taxon>
        <taxon>Xanthomonas</taxon>
    </lineage>
</organism>